<evidence type="ECO:0000255" key="1">
    <source>
        <dbReference type="HAMAP-Rule" id="MF_01337"/>
    </source>
</evidence>
<evidence type="ECO:0000305" key="2"/>
<reference key="1">
    <citation type="journal article" date="2007" name="Genome Res.">
        <title>Genome characteristics of facultatively symbiotic Frankia sp. strains reflect host range and host plant biogeography.</title>
        <authorList>
            <person name="Normand P."/>
            <person name="Lapierre P."/>
            <person name="Tisa L.S."/>
            <person name="Gogarten J.P."/>
            <person name="Alloisio N."/>
            <person name="Bagnarol E."/>
            <person name="Bassi C.A."/>
            <person name="Berry A.M."/>
            <person name="Bickhart D.M."/>
            <person name="Choisne N."/>
            <person name="Couloux A."/>
            <person name="Cournoyer B."/>
            <person name="Cruveiller S."/>
            <person name="Daubin V."/>
            <person name="Demange N."/>
            <person name="Francino M.P."/>
            <person name="Goltsman E."/>
            <person name="Huang Y."/>
            <person name="Kopp O.R."/>
            <person name="Labarre L."/>
            <person name="Lapidus A."/>
            <person name="Lavire C."/>
            <person name="Marechal J."/>
            <person name="Martinez M."/>
            <person name="Mastronunzio J.E."/>
            <person name="Mullin B.C."/>
            <person name="Niemann J."/>
            <person name="Pujic P."/>
            <person name="Rawnsley T."/>
            <person name="Rouy Z."/>
            <person name="Schenowitz C."/>
            <person name="Sellstedt A."/>
            <person name="Tavares F."/>
            <person name="Tomkins J.P."/>
            <person name="Vallenet D."/>
            <person name="Valverde C."/>
            <person name="Wall L.G."/>
            <person name="Wang Y."/>
            <person name="Medigue C."/>
            <person name="Benson D.R."/>
        </authorList>
    </citation>
    <scope>NUCLEOTIDE SEQUENCE [LARGE SCALE GENOMIC DNA]</scope>
    <source>
        <strain>DSM 45818 / CECT 9043 / HFP020203 / CcI3</strain>
    </source>
</reference>
<gene>
    <name evidence="1" type="primary">rplR</name>
    <name type="ordered locus">Francci3_0598</name>
</gene>
<proteinExistence type="inferred from homology"/>
<protein>
    <recommendedName>
        <fullName evidence="1">Large ribosomal subunit protein uL18</fullName>
    </recommendedName>
    <alternativeName>
        <fullName evidence="2">50S ribosomal protein L18</fullName>
    </alternativeName>
</protein>
<sequence>MAVSLGASSRRRTAKLRRHVRVRKKVAGTPSRPRLVVTRSSRHIYAQVIDDVAGHTLASASTLDVSLRGGEGDKTEQARKVGALVAERAKAAGIAAVVFDRGGRTYSGRIAALADAARGNGLDF</sequence>
<feature type="chain" id="PRO_0000251315" description="Large ribosomal subunit protein uL18">
    <location>
        <begin position="1"/>
        <end position="124"/>
    </location>
</feature>
<name>RL18_FRACC</name>
<dbReference type="EMBL" id="CP000249">
    <property type="protein sequence ID" value="ABD09982.1"/>
    <property type="molecule type" value="Genomic_DNA"/>
</dbReference>
<dbReference type="RefSeq" id="WP_011435053.1">
    <property type="nucleotide sequence ID" value="NZ_MSEA01000047.1"/>
</dbReference>
<dbReference type="SMR" id="Q2JFG0"/>
<dbReference type="STRING" id="106370.Francci3_0598"/>
<dbReference type="KEGG" id="fra:Francci3_0598"/>
<dbReference type="eggNOG" id="COG0256">
    <property type="taxonomic scope" value="Bacteria"/>
</dbReference>
<dbReference type="HOGENOM" id="CLU_098841_0_1_11"/>
<dbReference type="OrthoDB" id="9810939at2"/>
<dbReference type="PhylomeDB" id="Q2JFG0"/>
<dbReference type="Proteomes" id="UP000001937">
    <property type="component" value="Chromosome"/>
</dbReference>
<dbReference type="GO" id="GO:0022625">
    <property type="term" value="C:cytosolic large ribosomal subunit"/>
    <property type="evidence" value="ECO:0007669"/>
    <property type="project" value="TreeGrafter"/>
</dbReference>
<dbReference type="GO" id="GO:0008097">
    <property type="term" value="F:5S rRNA binding"/>
    <property type="evidence" value="ECO:0007669"/>
    <property type="project" value="TreeGrafter"/>
</dbReference>
<dbReference type="GO" id="GO:0003735">
    <property type="term" value="F:structural constituent of ribosome"/>
    <property type="evidence" value="ECO:0007669"/>
    <property type="project" value="InterPro"/>
</dbReference>
<dbReference type="GO" id="GO:0006412">
    <property type="term" value="P:translation"/>
    <property type="evidence" value="ECO:0007669"/>
    <property type="project" value="UniProtKB-UniRule"/>
</dbReference>
<dbReference type="CDD" id="cd00432">
    <property type="entry name" value="Ribosomal_L18_L5e"/>
    <property type="match status" value="1"/>
</dbReference>
<dbReference type="FunFam" id="3.30.420.100:FF:000001">
    <property type="entry name" value="50S ribosomal protein L18"/>
    <property type="match status" value="1"/>
</dbReference>
<dbReference type="Gene3D" id="3.30.420.100">
    <property type="match status" value="1"/>
</dbReference>
<dbReference type="HAMAP" id="MF_01337_B">
    <property type="entry name" value="Ribosomal_uL18_B"/>
    <property type="match status" value="1"/>
</dbReference>
<dbReference type="InterPro" id="IPR004389">
    <property type="entry name" value="Ribosomal_uL18_bac-type"/>
</dbReference>
<dbReference type="InterPro" id="IPR005484">
    <property type="entry name" value="Ribosomal_uL18_bac/euk"/>
</dbReference>
<dbReference type="NCBIfam" id="TIGR00060">
    <property type="entry name" value="L18_bact"/>
    <property type="match status" value="1"/>
</dbReference>
<dbReference type="PANTHER" id="PTHR12899">
    <property type="entry name" value="39S RIBOSOMAL PROTEIN L18, MITOCHONDRIAL"/>
    <property type="match status" value="1"/>
</dbReference>
<dbReference type="PANTHER" id="PTHR12899:SF3">
    <property type="entry name" value="LARGE RIBOSOMAL SUBUNIT PROTEIN UL18M"/>
    <property type="match status" value="1"/>
</dbReference>
<dbReference type="Pfam" id="PF00861">
    <property type="entry name" value="Ribosomal_L18p"/>
    <property type="match status" value="1"/>
</dbReference>
<dbReference type="SUPFAM" id="SSF53137">
    <property type="entry name" value="Translational machinery components"/>
    <property type="match status" value="1"/>
</dbReference>
<comment type="function">
    <text evidence="1">This is one of the proteins that bind and probably mediate the attachment of the 5S RNA into the large ribosomal subunit, where it forms part of the central protuberance.</text>
</comment>
<comment type="subunit">
    <text evidence="1">Part of the 50S ribosomal subunit; part of the 5S rRNA/L5/L18/L25 subcomplex. Contacts the 5S and 23S rRNAs.</text>
</comment>
<comment type="similarity">
    <text evidence="1">Belongs to the universal ribosomal protein uL18 family.</text>
</comment>
<keyword id="KW-1185">Reference proteome</keyword>
<keyword id="KW-0687">Ribonucleoprotein</keyword>
<keyword id="KW-0689">Ribosomal protein</keyword>
<keyword id="KW-0694">RNA-binding</keyword>
<keyword id="KW-0699">rRNA-binding</keyword>
<organism>
    <name type="scientific">Frankia casuarinae (strain DSM 45818 / CECT 9043 / HFP020203 / CcI3)</name>
    <dbReference type="NCBI Taxonomy" id="106370"/>
    <lineage>
        <taxon>Bacteria</taxon>
        <taxon>Bacillati</taxon>
        <taxon>Actinomycetota</taxon>
        <taxon>Actinomycetes</taxon>
        <taxon>Frankiales</taxon>
        <taxon>Frankiaceae</taxon>
        <taxon>Frankia</taxon>
    </lineage>
</organism>
<accession>Q2JFG0</accession>